<proteinExistence type="inferred from homology"/>
<feature type="chain" id="PRO_0000217140" description="Cytochrome b6-f complex subunit 8">
    <location>
        <begin position="1"/>
        <end position="34"/>
    </location>
</feature>
<feature type="transmembrane region" description="Helical" evidence="1">
    <location>
        <begin position="3"/>
        <end position="23"/>
    </location>
</feature>
<dbReference type="EMBL" id="BX548174">
    <property type="protein sequence ID" value="CAE19199.1"/>
    <property type="molecule type" value="Genomic_DNA"/>
</dbReference>
<dbReference type="SMR" id="Q7V1W2"/>
<dbReference type="STRING" id="59919.PMM0740"/>
<dbReference type="KEGG" id="pmm:PMM0740"/>
<dbReference type="HOGENOM" id="CLU_215774_0_0_3"/>
<dbReference type="Proteomes" id="UP000001026">
    <property type="component" value="Chromosome"/>
</dbReference>
<dbReference type="GO" id="GO:0009512">
    <property type="term" value="C:cytochrome b6f complex"/>
    <property type="evidence" value="ECO:0007669"/>
    <property type="project" value="InterPro"/>
</dbReference>
<dbReference type="GO" id="GO:0031676">
    <property type="term" value="C:plasma membrane-derived thylakoid membrane"/>
    <property type="evidence" value="ECO:0007669"/>
    <property type="project" value="UniProtKB-SubCell"/>
</dbReference>
<dbReference type="GO" id="GO:0045158">
    <property type="term" value="F:electron transporter, transferring electrons within cytochrome b6/f complex of photosystem II activity"/>
    <property type="evidence" value="ECO:0007669"/>
    <property type="project" value="InterPro"/>
</dbReference>
<dbReference type="GO" id="GO:0017004">
    <property type="term" value="P:cytochrome complex assembly"/>
    <property type="evidence" value="ECO:0007669"/>
    <property type="project" value="UniProtKB-UniRule"/>
</dbReference>
<dbReference type="GO" id="GO:0015979">
    <property type="term" value="P:photosynthesis"/>
    <property type="evidence" value="ECO:0007669"/>
    <property type="project" value="UniProtKB-KW"/>
</dbReference>
<dbReference type="HAMAP" id="MF_00395">
    <property type="entry name" value="Cytb6_f_PetN"/>
    <property type="match status" value="1"/>
</dbReference>
<dbReference type="InterPro" id="IPR036143">
    <property type="entry name" value="Cytochr_b6-f_cplx_su8_sf"/>
</dbReference>
<dbReference type="InterPro" id="IPR005497">
    <property type="entry name" value="Cytochrome_b6-f_cplx_su8"/>
</dbReference>
<dbReference type="NCBIfam" id="NF002709">
    <property type="entry name" value="PRK02529.1"/>
    <property type="match status" value="1"/>
</dbReference>
<dbReference type="Pfam" id="PF03742">
    <property type="entry name" value="PetN"/>
    <property type="match status" value="1"/>
</dbReference>
<dbReference type="SUPFAM" id="SSF103451">
    <property type="entry name" value="PetN subunit of the cytochrome b6f complex"/>
    <property type="match status" value="1"/>
</dbReference>
<name>PETN_PROMP</name>
<gene>
    <name evidence="1" type="primary">petN</name>
    <name type="ordered locus">PMM0740</name>
</gene>
<accession>Q7V1W2</accession>
<sequence length="34" mass="3703">MMIFQIGWAALAAIFTFSIAMVVWGRNGDGSIDI</sequence>
<comment type="function">
    <text evidence="1">Component of the cytochrome b6-f complex, which mediates electron transfer between photosystem II (PSII) and photosystem I (PSI), cyclic electron flow around PSI, and state transitions.</text>
</comment>
<comment type="subunit">
    <text evidence="1">The 4 large subunits of the cytochrome b6-f complex are cytochrome b6, subunit IV (17 kDa polypeptide, PetD), cytochrome f and the Rieske protein, while the 4 small subunits are PetG, PetL, PetM and PetN. The complex functions as a dimer.</text>
</comment>
<comment type="subcellular location">
    <subcellularLocation>
        <location evidence="1">Cellular thylakoid membrane</location>
        <topology evidence="1">Single-pass membrane protein</topology>
    </subcellularLocation>
</comment>
<comment type="similarity">
    <text evidence="1">Belongs to the PetN family.</text>
</comment>
<organism>
    <name type="scientific">Prochlorococcus marinus subsp. pastoris (strain CCMP1986 / NIES-2087 / MED4)</name>
    <dbReference type="NCBI Taxonomy" id="59919"/>
    <lineage>
        <taxon>Bacteria</taxon>
        <taxon>Bacillati</taxon>
        <taxon>Cyanobacteriota</taxon>
        <taxon>Cyanophyceae</taxon>
        <taxon>Synechococcales</taxon>
        <taxon>Prochlorococcaceae</taxon>
        <taxon>Prochlorococcus</taxon>
    </lineage>
</organism>
<protein>
    <recommendedName>
        <fullName evidence="1">Cytochrome b6-f complex subunit 8</fullName>
    </recommendedName>
    <alternativeName>
        <fullName evidence="1">Cytochrome b6-f complex subunit PetN</fullName>
    </alternativeName>
    <alternativeName>
        <fullName evidence="1">Cytochrome b6-f complex subunit VIII</fullName>
    </alternativeName>
</protein>
<evidence type="ECO:0000255" key="1">
    <source>
        <dbReference type="HAMAP-Rule" id="MF_00395"/>
    </source>
</evidence>
<reference key="1">
    <citation type="journal article" date="2003" name="Nature">
        <title>Genome divergence in two Prochlorococcus ecotypes reflects oceanic niche differentiation.</title>
        <authorList>
            <person name="Rocap G."/>
            <person name="Larimer F.W."/>
            <person name="Lamerdin J.E."/>
            <person name="Malfatti S."/>
            <person name="Chain P."/>
            <person name="Ahlgren N.A."/>
            <person name="Arellano A."/>
            <person name="Coleman M."/>
            <person name="Hauser L."/>
            <person name="Hess W.R."/>
            <person name="Johnson Z.I."/>
            <person name="Land M.L."/>
            <person name="Lindell D."/>
            <person name="Post A.F."/>
            <person name="Regala W."/>
            <person name="Shah M."/>
            <person name="Shaw S.L."/>
            <person name="Steglich C."/>
            <person name="Sullivan M.B."/>
            <person name="Ting C.S."/>
            <person name="Tolonen A."/>
            <person name="Webb E.A."/>
            <person name="Zinser E.R."/>
            <person name="Chisholm S.W."/>
        </authorList>
    </citation>
    <scope>NUCLEOTIDE SEQUENCE [LARGE SCALE GENOMIC DNA]</scope>
    <source>
        <strain>CCMP1986 / NIES-2087 / MED4</strain>
    </source>
</reference>
<keyword id="KW-0249">Electron transport</keyword>
<keyword id="KW-0472">Membrane</keyword>
<keyword id="KW-0602">Photosynthesis</keyword>
<keyword id="KW-0793">Thylakoid</keyword>
<keyword id="KW-0812">Transmembrane</keyword>
<keyword id="KW-1133">Transmembrane helix</keyword>
<keyword id="KW-0813">Transport</keyword>